<reference key="1">
    <citation type="journal article" date="2009" name="Genome Biol.">
        <title>Genomic and genetic analyses of diversity and plant interactions of Pseudomonas fluorescens.</title>
        <authorList>
            <person name="Silby M.W."/>
            <person name="Cerdeno-Tarraga A.M."/>
            <person name="Vernikos G.S."/>
            <person name="Giddens S.R."/>
            <person name="Jackson R.W."/>
            <person name="Preston G.M."/>
            <person name="Zhang X.-X."/>
            <person name="Moon C.D."/>
            <person name="Gehrig S.M."/>
            <person name="Godfrey S.A.C."/>
            <person name="Knight C.G."/>
            <person name="Malone J.G."/>
            <person name="Robinson Z."/>
            <person name="Spiers A.J."/>
            <person name="Harris S."/>
            <person name="Challis G.L."/>
            <person name="Yaxley A.M."/>
            <person name="Harris D."/>
            <person name="Seeger K."/>
            <person name="Murphy L."/>
            <person name="Rutter S."/>
            <person name="Squares R."/>
            <person name="Quail M.A."/>
            <person name="Saunders E."/>
            <person name="Mavromatis K."/>
            <person name="Brettin T.S."/>
            <person name="Bentley S.D."/>
            <person name="Hothersall J."/>
            <person name="Stephens E."/>
            <person name="Thomas C.M."/>
            <person name="Parkhill J."/>
            <person name="Levy S.B."/>
            <person name="Rainey P.B."/>
            <person name="Thomson N.R."/>
        </authorList>
    </citation>
    <scope>NUCLEOTIDE SEQUENCE [LARGE SCALE GENOMIC DNA]</scope>
    <source>
        <strain>Pf0-1</strain>
    </source>
</reference>
<comment type="function">
    <text evidence="1">One of the primary rRNA binding proteins, it binds directly to 16S rRNA where it helps nucleate assembly of the platform of the 30S subunit by binding and bridging several RNA helices of the 16S rRNA.</text>
</comment>
<comment type="function">
    <text evidence="1">Forms an intersubunit bridge (bridge B4) with the 23S rRNA of the 50S subunit in the ribosome.</text>
</comment>
<comment type="subunit">
    <text evidence="1">Part of the 30S ribosomal subunit. Forms a bridge to the 50S subunit in the 70S ribosome, contacting the 23S rRNA.</text>
</comment>
<comment type="similarity">
    <text evidence="1">Belongs to the universal ribosomal protein uS15 family.</text>
</comment>
<organism>
    <name type="scientific">Pseudomonas fluorescens (strain Pf0-1)</name>
    <dbReference type="NCBI Taxonomy" id="205922"/>
    <lineage>
        <taxon>Bacteria</taxon>
        <taxon>Pseudomonadati</taxon>
        <taxon>Pseudomonadota</taxon>
        <taxon>Gammaproteobacteria</taxon>
        <taxon>Pseudomonadales</taxon>
        <taxon>Pseudomonadaceae</taxon>
        <taxon>Pseudomonas</taxon>
    </lineage>
</organism>
<protein>
    <recommendedName>
        <fullName evidence="1">Small ribosomal subunit protein uS15</fullName>
    </recommendedName>
    <alternativeName>
        <fullName evidence="2">30S ribosomal protein S15</fullName>
    </alternativeName>
</protein>
<evidence type="ECO:0000255" key="1">
    <source>
        <dbReference type="HAMAP-Rule" id="MF_01343"/>
    </source>
</evidence>
<evidence type="ECO:0000305" key="2"/>
<name>RS15_PSEPF</name>
<gene>
    <name evidence="1" type="primary">rpsO</name>
    <name type="ordered locus">Pfl01_0782</name>
</gene>
<sequence>MALDVQEKAQIVADYQQAVGDTGSPEVQVALLTANINKLQGHFKANGKDHHSRRGLIRMVNQRRKLLDYLKGKDVSRYSALIARLGLRR</sequence>
<accession>Q3KI81</accession>
<feature type="chain" id="PRO_0000255515" description="Small ribosomal subunit protein uS15">
    <location>
        <begin position="1"/>
        <end position="89"/>
    </location>
</feature>
<proteinExistence type="inferred from homology"/>
<dbReference type="EMBL" id="CP000094">
    <property type="protein sequence ID" value="ABA72525.1"/>
    <property type="molecule type" value="Genomic_DNA"/>
</dbReference>
<dbReference type="RefSeq" id="WP_011332409.1">
    <property type="nucleotide sequence ID" value="NC_007492.2"/>
</dbReference>
<dbReference type="SMR" id="Q3KI81"/>
<dbReference type="GeneID" id="72192743"/>
<dbReference type="KEGG" id="pfo:Pfl01_0782"/>
<dbReference type="eggNOG" id="COG0184">
    <property type="taxonomic scope" value="Bacteria"/>
</dbReference>
<dbReference type="HOGENOM" id="CLU_148518_0_0_6"/>
<dbReference type="Proteomes" id="UP000002704">
    <property type="component" value="Chromosome"/>
</dbReference>
<dbReference type="GO" id="GO:0022627">
    <property type="term" value="C:cytosolic small ribosomal subunit"/>
    <property type="evidence" value="ECO:0007669"/>
    <property type="project" value="TreeGrafter"/>
</dbReference>
<dbReference type="GO" id="GO:0019843">
    <property type="term" value="F:rRNA binding"/>
    <property type="evidence" value="ECO:0007669"/>
    <property type="project" value="UniProtKB-UniRule"/>
</dbReference>
<dbReference type="GO" id="GO:0003735">
    <property type="term" value="F:structural constituent of ribosome"/>
    <property type="evidence" value="ECO:0007669"/>
    <property type="project" value="InterPro"/>
</dbReference>
<dbReference type="GO" id="GO:0006412">
    <property type="term" value="P:translation"/>
    <property type="evidence" value="ECO:0007669"/>
    <property type="project" value="UniProtKB-UniRule"/>
</dbReference>
<dbReference type="CDD" id="cd00353">
    <property type="entry name" value="Ribosomal_S15p_S13e"/>
    <property type="match status" value="1"/>
</dbReference>
<dbReference type="FunFam" id="1.10.287.10:FF:000002">
    <property type="entry name" value="30S ribosomal protein S15"/>
    <property type="match status" value="1"/>
</dbReference>
<dbReference type="Gene3D" id="6.10.250.3130">
    <property type="match status" value="1"/>
</dbReference>
<dbReference type="Gene3D" id="1.10.287.10">
    <property type="entry name" value="S15/NS1, RNA-binding"/>
    <property type="match status" value="1"/>
</dbReference>
<dbReference type="HAMAP" id="MF_01343_B">
    <property type="entry name" value="Ribosomal_uS15_B"/>
    <property type="match status" value="1"/>
</dbReference>
<dbReference type="InterPro" id="IPR000589">
    <property type="entry name" value="Ribosomal_uS15"/>
</dbReference>
<dbReference type="InterPro" id="IPR005290">
    <property type="entry name" value="Ribosomal_uS15_bac-type"/>
</dbReference>
<dbReference type="InterPro" id="IPR009068">
    <property type="entry name" value="uS15_NS1_RNA-bd_sf"/>
</dbReference>
<dbReference type="NCBIfam" id="TIGR00952">
    <property type="entry name" value="S15_bact"/>
    <property type="match status" value="1"/>
</dbReference>
<dbReference type="PANTHER" id="PTHR23321">
    <property type="entry name" value="RIBOSOMAL PROTEIN S15, BACTERIAL AND ORGANELLAR"/>
    <property type="match status" value="1"/>
</dbReference>
<dbReference type="PANTHER" id="PTHR23321:SF26">
    <property type="entry name" value="SMALL RIBOSOMAL SUBUNIT PROTEIN US15M"/>
    <property type="match status" value="1"/>
</dbReference>
<dbReference type="Pfam" id="PF00312">
    <property type="entry name" value="Ribosomal_S15"/>
    <property type="match status" value="1"/>
</dbReference>
<dbReference type="SMART" id="SM01387">
    <property type="entry name" value="Ribosomal_S15"/>
    <property type="match status" value="1"/>
</dbReference>
<dbReference type="SUPFAM" id="SSF47060">
    <property type="entry name" value="S15/NS1 RNA-binding domain"/>
    <property type="match status" value="1"/>
</dbReference>
<dbReference type="PROSITE" id="PS00362">
    <property type="entry name" value="RIBOSOMAL_S15"/>
    <property type="match status" value="1"/>
</dbReference>
<keyword id="KW-0687">Ribonucleoprotein</keyword>
<keyword id="KW-0689">Ribosomal protein</keyword>
<keyword id="KW-0694">RNA-binding</keyword>
<keyword id="KW-0699">rRNA-binding</keyword>